<protein>
    <recommendedName>
        <fullName evidence="1">ATP synthase subunit delta</fullName>
    </recommendedName>
    <alternativeName>
        <fullName evidence="1">ATP synthase F(1) sector subunit delta</fullName>
    </alternativeName>
    <alternativeName>
        <fullName evidence="1">F-type ATPase subunit delta</fullName>
        <shortName evidence="1">F-ATPase subunit delta</shortName>
    </alternativeName>
</protein>
<name>ATPD_STAAM</name>
<keyword id="KW-0066">ATP synthesis</keyword>
<keyword id="KW-1003">Cell membrane</keyword>
<keyword id="KW-0139">CF(1)</keyword>
<keyword id="KW-0375">Hydrogen ion transport</keyword>
<keyword id="KW-0406">Ion transport</keyword>
<keyword id="KW-0472">Membrane</keyword>
<keyword id="KW-0813">Transport</keyword>
<feature type="chain" id="PRO_0000193481" description="ATP synthase subunit delta">
    <location>
        <begin position="1"/>
        <end position="179"/>
    </location>
</feature>
<accession>P63658</accession>
<accession>Q99SF2</accession>
<organism>
    <name type="scientific">Staphylococcus aureus (strain Mu50 / ATCC 700699)</name>
    <dbReference type="NCBI Taxonomy" id="158878"/>
    <lineage>
        <taxon>Bacteria</taxon>
        <taxon>Bacillati</taxon>
        <taxon>Bacillota</taxon>
        <taxon>Bacilli</taxon>
        <taxon>Bacillales</taxon>
        <taxon>Staphylococcaceae</taxon>
        <taxon>Staphylococcus</taxon>
    </lineage>
</organism>
<comment type="function">
    <text evidence="1">F(1)F(0) ATP synthase produces ATP from ADP in the presence of a proton or sodium gradient. F-type ATPases consist of two structural domains, F(1) containing the extramembraneous catalytic core and F(0) containing the membrane proton channel, linked together by a central stalk and a peripheral stalk. During catalysis, ATP synthesis in the catalytic domain of F(1) is coupled via a rotary mechanism of the central stalk subunits to proton translocation.</text>
</comment>
<comment type="function">
    <text evidence="1">This protein is part of the stalk that links CF(0) to CF(1). It either transmits conformational changes from CF(0) to CF(1) or is implicated in proton conduction.</text>
</comment>
<comment type="subunit">
    <text evidence="1">F-type ATPases have 2 components, F(1) - the catalytic core - and F(0) - the membrane proton channel. F(1) has five subunits: alpha(3), beta(3), gamma(1), delta(1), epsilon(1). F(0) has three main subunits: a(1), b(2) and c(10-14). The alpha and beta chains form an alternating ring which encloses part of the gamma chain. F(1) is attached to F(0) by a central stalk formed by the gamma and epsilon chains, while a peripheral stalk is formed by the delta and b chains.</text>
</comment>
<comment type="subcellular location">
    <subcellularLocation>
        <location evidence="1">Cell membrane</location>
        <topology evidence="1">Peripheral membrane protein</topology>
    </subcellularLocation>
</comment>
<comment type="similarity">
    <text evidence="1">Belongs to the ATPase delta chain family.</text>
</comment>
<dbReference type="EMBL" id="BA000017">
    <property type="protein sequence ID" value="BAB58268.1"/>
    <property type="molecule type" value="Genomic_DNA"/>
</dbReference>
<dbReference type="RefSeq" id="WP_000241344.1">
    <property type="nucleotide sequence ID" value="NC_002758.2"/>
</dbReference>
<dbReference type="SMR" id="P63658"/>
<dbReference type="DNASU" id="1122122"/>
<dbReference type="KEGG" id="sav:SAV2106"/>
<dbReference type="HOGENOM" id="CLU_085114_4_1_9"/>
<dbReference type="PhylomeDB" id="P63658"/>
<dbReference type="Proteomes" id="UP000002481">
    <property type="component" value="Chromosome"/>
</dbReference>
<dbReference type="GO" id="GO:0005886">
    <property type="term" value="C:plasma membrane"/>
    <property type="evidence" value="ECO:0007669"/>
    <property type="project" value="UniProtKB-SubCell"/>
</dbReference>
<dbReference type="GO" id="GO:0045259">
    <property type="term" value="C:proton-transporting ATP synthase complex"/>
    <property type="evidence" value="ECO:0007669"/>
    <property type="project" value="UniProtKB-KW"/>
</dbReference>
<dbReference type="GO" id="GO:0046933">
    <property type="term" value="F:proton-transporting ATP synthase activity, rotational mechanism"/>
    <property type="evidence" value="ECO:0007669"/>
    <property type="project" value="UniProtKB-UniRule"/>
</dbReference>
<dbReference type="Gene3D" id="1.10.520.20">
    <property type="entry name" value="N-terminal domain of the delta subunit of the F1F0-ATP synthase"/>
    <property type="match status" value="1"/>
</dbReference>
<dbReference type="HAMAP" id="MF_01416">
    <property type="entry name" value="ATP_synth_delta_bact"/>
    <property type="match status" value="1"/>
</dbReference>
<dbReference type="InterPro" id="IPR026015">
    <property type="entry name" value="ATP_synth_OSCP/delta_N_sf"/>
</dbReference>
<dbReference type="InterPro" id="IPR020781">
    <property type="entry name" value="ATPase_OSCP/d_CS"/>
</dbReference>
<dbReference type="InterPro" id="IPR000711">
    <property type="entry name" value="ATPase_OSCP/dsu"/>
</dbReference>
<dbReference type="NCBIfam" id="TIGR01145">
    <property type="entry name" value="ATP_synt_delta"/>
    <property type="match status" value="1"/>
</dbReference>
<dbReference type="NCBIfam" id="NF004399">
    <property type="entry name" value="PRK05758.1-1"/>
    <property type="match status" value="1"/>
</dbReference>
<dbReference type="PANTHER" id="PTHR11910">
    <property type="entry name" value="ATP SYNTHASE DELTA CHAIN"/>
    <property type="match status" value="1"/>
</dbReference>
<dbReference type="Pfam" id="PF00213">
    <property type="entry name" value="OSCP"/>
    <property type="match status" value="1"/>
</dbReference>
<dbReference type="PRINTS" id="PR00125">
    <property type="entry name" value="ATPASEDELTA"/>
</dbReference>
<dbReference type="SUPFAM" id="SSF47928">
    <property type="entry name" value="N-terminal domain of the delta subunit of the F1F0-ATP synthase"/>
    <property type="match status" value="1"/>
</dbReference>
<dbReference type="PROSITE" id="PS00389">
    <property type="entry name" value="ATPASE_DELTA"/>
    <property type="match status" value="1"/>
</dbReference>
<gene>
    <name evidence="1" type="primary">atpH</name>
    <name type="ordered locus">SAV2106</name>
</gene>
<proteinExistence type="inferred from homology"/>
<evidence type="ECO:0000255" key="1">
    <source>
        <dbReference type="HAMAP-Rule" id="MF_01416"/>
    </source>
</evidence>
<reference key="1">
    <citation type="journal article" date="2001" name="Lancet">
        <title>Whole genome sequencing of meticillin-resistant Staphylococcus aureus.</title>
        <authorList>
            <person name="Kuroda M."/>
            <person name="Ohta T."/>
            <person name="Uchiyama I."/>
            <person name="Baba T."/>
            <person name="Yuzawa H."/>
            <person name="Kobayashi I."/>
            <person name="Cui L."/>
            <person name="Oguchi A."/>
            <person name="Aoki K."/>
            <person name="Nagai Y."/>
            <person name="Lian J.-Q."/>
            <person name="Ito T."/>
            <person name="Kanamori M."/>
            <person name="Matsumaru H."/>
            <person name="Maruyama A."/>
            <person name="Murakami H."/>
            <person name="Hosoyama A."/>
            <person name="Mizutani-Ui Y."/>
            <person name="Takahashi N.K."/>
            <person name="Sawano T."/>
            <person name="Inoue R."/>
            <person name="Kaito C."/>
            <person name="Sekimizu K."/>
            <person name="Hirakawa H."/>
            <person name="Kuhara S."/>
            <person name="Goto S."/>
            <person name="Yabuzaki J."/>
            <person name="Kanehisa M."/>
            <person name="Yamashita A."/>
            <person name="Oshima K."/>
            <person name="Furuya K."/>
            <person name="Yoshino C."/>
            <person name="Shiba T."/>
            <person name="Hattori M."/>
            <person name="Ogasawara N."/>
            <person name="Hayashi H."/>
            <person name="Hiramatsu K."/>
        </authorList>
    </citation>
    <scope>NUCLEOTIDE SEQUENCE [LARGE SCALE GENOMIC DNA]</scope>
    <source>
        <strain>Mu50 / ATCC 700699</strain>
    </source>
</reference>
<sequence>MVKVANKYAKALFDVSLDTNNLETINEELTVINEAVKDKIEQLKMVDSNPTQTAEQRRELINGVFTDINPYIKNMMYVLADNRHISLIADVFKAFQSLYNGHYNQDFATIESTYELSQEELDKIVKLVTQQTKLSKVIVDTKINPDLIGGFRVKVGTTVLDGSVRNDLVQLQRKFRRVN</sequence>